<name>PSBN_BARVE</name>
<reference key="1">
    <citation type="submission" date="2007-03" db="EMBL/GenBank/DDBJ databases">
        <title>Sequencing analysis of Barbarea verna chloroplast DNA.</title>
        <authorList>
            <person name="Hosouchi T."/>
            <person name="Tsuruoka H."/>
            <person name="Kotani H."/>
        </authorList>
    </citation>
    <scope>NUCLEOTIDE SEQUENCE [LARGE SCALE GENOMIC DNA]</scope>
</reference>
<accession>A4QKD3</accession>
<keyword id="KW-0150">Chloroplast</keyword>
<keyword id="KW-0472">Membrane</keyword>
<keyword id="KW-0934">Plastid</keyword>
<keyword id="KW-0793">Thylakoid</keyword>
<keyword id="KW-0812">Transmembrane</keyword>
<keyword id="KW-1133">Transmembrane helix</keyword>
<comment type="function">
    <text evidence="1">May play a role in photosystem I and II biogenesis.</text>
</comment>
<comment type="subcellular location">
    <subcellularLocation>
        <location evidence="1">Plastid</location>
        <location evidence="1">Chloroplast thylakoid membrane</location>
        <topology evidence="1">Single-pass membrane protein</topology>
    </subcellularLocation>
</comment>
<comment type="similarity">
    <text evidence="1">Belongs to the PsbN family.</text>
</comment>
<comment type="caution">
    <text evidence="1">Originally thought to be a component of PSII; based on experiments in Synechocystis, N.tabacum and barley, and its absence from PSII in T.elongatus and T.vulcanus, this is probably not true.</text>
</comment>
<geneLocation type="chloroplast"/>
<dbReference type="EMBL" id="AP009370">
    <property type="protein sequence ID" value="BAF50138.1"/>
    <property type="molecule type" value="Genomic_DNA"/>
</dbReference>
<dbReference type="RefSeq" id="YP_001123314.1">
    <property type="nucleotide sequence ID" value="NC_009269.1"/>
</dbReference>
<dbReference type="SMR" id="A4QKD3"/>
<dbReference type="GeneID" id="4961870"/>
<dbReference type="GO" id="GO:0009535">
    <property type="term" value="C:chloroplast thylakoid membrane"/>
    <property type="evidence" value="ECO:0007669"/>
    <property type="project" value="UniProtKB-SubCell"/>
</dbReference>
<dbReference type="GO" id="GO:0015979">
    <property type="term" value="P:photosynthesis"/>
    <property type="evidence" value="ECO:0007669"/>
    <property type="project" value="InterPro"/>
</dbReference>
<dbReference type="HAMAP" id="MF_00293">
    <property type="entry name" value="PSII_PsbN"/>
    <property type="match status" value="1"/>
</dbReference>
<dbReference type="InterPro" id="IPR003398">
    <property type="entry name" value="PSII_PsbN"/>
</dbReference>
<dbReference type="PANTHER" id="PTHR35326">
    <property type="entry name" value="PROTEIN PSBN"/>
    <property type="match status" value="1"/>
</dbReference>
<dbReference type="PANTHER" id="PTHR35326:SF3">
    <property type="entry name" value="PROTEIN PSBN"/>
    <property type="match status" value="1"/>
</dbReference>
<dbReference type="Pfam" id="PF02468">
    <property type="entry name" value="PsbN"/>
    <property type="match status" value="1"/>
</dbReference>
<protein>
    <recommendedName>
        <fullName evidence="1">Protein PsbN</fullName>
    </recommendedName>
</protein>
<sequence length="43" mass="4722">METATLVAIFISGLLVSFTGYALYTAFGQPSQQLRDPFEEHGD</sequence>
<gene>
    <name evidence="1" type="primary">psbN</name>
</gene>
<feature type="chain" id="PRO_0000362177" description="Protein PsbN">
    <location>
        <begin position="1"/>
        <end position="43"/>
    </location>
</feature>
<feature type="transmembrane region" description="Helical" evidence="1">
    <location>
        <begin position="7"/>
        <end position="27"/>
    </location>
</feature>
<organism>
    <name type="scientific">Barbarea verna</name>
    <name type="common">Land cress</name>
    <name type="synonym">Erysimum vernum</name>
    <dbReference type="NCBI Taxonomy" id="50458"/>
    <lineage>
        <taxon>Eukaryota</taxon>
        <taxon>Viridiplantae</taxon>
        <taxon>Streptophyta</taxon>
        <taxon>Embryophyta</taxon>
        <taxon>Tracheophyta</taxon>
        <taxon>Spermatophyta</taxon>
        <taxon>Magnoliopsida</taxon>
        <taxon>eudicotyledons</taxon>
        <taxon>Gunneridae</taxon>
        <taxon>Pentapetalae</taxon>
        <taxon>rosids</taxon>
        <taxon>malvids</taxon>
        <taxon>Brassicales</taxon>
        <taxon>Brassicaceae</taxon>
        <taxon>Cardamineae</taxon>
        <taxon>Barbarea</taxon>
    </lineage>
</organism>
<evidence type="ECO:0000255" key="1">
    <source>
        <dbReference type="HAMAP-Rule" id="MF_00293"/>
    </source>
</evidence>
<proteinExistence type="inferred from homology"/>